<evidence type="ECO:0000255" key="1">
    <source>
        <dbReference type="HAMAP-Rule" id="MF_03152"/>
    </source>
</evidence>
<evidence type="ECO:0000305" key="2"/>
<protein>
    <recommendedName>
        <fullName evidence="1">tRNA (guanine(37)-N(1))-methyltransferase</fullName>
        <ecNumber evidence="1">2.1.1.228</ecNumber>
    </recommendedName>
    <alternativeName>
        <fullName evidence="1">M1G-methyltransferase</fullName>
    </alternativeName>
    <alternativeName>
        <fullName evidence="1">tRNA [GM37] methyltransferase</fullName>
    </alternativeName>
    <alternativeName>
        <fullName evidence="1">tRNA methyltransferase 5</fullName>
    </alternativeName>
</protein>
<keyword id="KW-0963">Cytoplasm</keyword>
<keyword id="KW-0489">Methyltransferase</keyword>
<keyword id="KW-0496">Mitochondrion</keyword>
<keyword id="KW-0539">Nucleus</keyword>
<keyword id="KW-1185">Reference proteome</keyword>
<keyword id="KW-0949">S-adenosyl-L-methionine</keyword>
<keyword id="KW-0808">Transferase</keyword>
<keyword id="KW-0819">tRNA processing</keyword>
<feature type="chain" id="PRO_0000414161" description="tRNA (guanine(37)-N(1))-methyltransferase">
    <location>
        <begin position="1"/>
        <end position="449"/>
    </location>
</feature>
<feature type="binding site" evidence="1">
    <location>
        <position position="216"/>
    </location>
    <ligand>
        <name>S-adenosyl-L-methionine</name>
        <dbReference type="ChEBI" id="CHEBI:59789"/>
    </ligand>
</feature>
<feature type="binding site" evidence="1">
    <location>
        <begin position="254"/>
        <end position="255"/>
    </location>
    <ligand>
        <name>S-adenosyl-L-methionine</name>
        <dbReference type="ChEBI" id="CHEBI:59789"/>
    </ligand>
</feature>
<feature type="binding site" evidence="1">
    <location>
        <begin position="282"/>
        <end position="283"/>
    </location>
    <ligand>
        <name>S-adenosyl-L-methionine</name>
        <dbReference type="ChEBI" id="CHEBI:59789"/>
    </ligand>
</feature>
<feature type="binding site" evidence="1">
    <location>
        <position position="345"/>
    </location>
    <ligand>
        <name>S-adenosyl-L-methionine</name>
        <dbReference type="ChEBI" id="CHEBI:59789"/>
    </ligand>
</feature>
<dbReference type="EC" id="2.1.1.228" evidence="1"/>
<dbReference type="EMBL" id="CP017626">
    <property type="protein sequence ID" value="AOW29126.1"/>
    <property type="molecule type" value="Genomic_DNA"/>
</dbReference>
<dbReference type="RefSeq" id="XP_709946.2">
    <property type="nucleotide sequence ID" value="XM_704854.2"/>
</dbReference>
<dbReference type="SMR" id="Q59TN1"/>
<dbReference type="FunCoup" id="Q59TN1">
    <property type="interactions" value="1155"/>
</dbReference>
<dbReference type="STRING" id="237561.Q59TN1"/>
<dbReference type="EnsemblFungi" id="C4_03730C_A-T">
    <property type="protein sequence ID" value="C4_03730C_A-T-p1"/>
    <property type="gene ID" value="C4_03730C_A"/>
</dbReference>
<dbReference type="GeneID" id="3645358"/>
<dbReference type="KEGG" id="cal:CAALFM_C403730CA"/>
<dbReference type="CGD" id="CAL0000174739">
    <property type="gene designation" value="orf19.8885"/>
</dbReference>
<dbReference type="VEuPathDB" id="FungiDB:C4_03730C_A"/>
<dbReference type="eggNOG" id="KOG2078">
    <property type="taxonomic scope" value="Eukaryota"/>
</dbReference>
<dbReference type="HOGENOM" id="CLU_022610_2_2_1"/>
<dbReference type="InParanoid" id="Q59TN1"/>
<dbReference type="OrthoDB" id="408788at2759"/>
<dbReference type="PRO" id="PR:Q59TN1"/>
<dbReference type="Proteomes" id="UP000000559">
    <property type="component" value="Chromosome 4"/>
</dbReference>
<dbReference type="GO" id="GO:0005737">
    <property type="term" value="C:cytoplasm"/>
    <property type="evidence" value="ECO:0000318"/>
    <property type="project" value="GO_Central"/>
</dbReference>
<dbReference type="GO" id="GO:0005759">
    <property type="term" value="C:mitochondrial matrix"/>
    <property type="evidence" value="ECO:0000318"/>
    <property type="project" value="GO_Central"/>
</dbReference>
<dbReference type="GO" id="GO:0005634">
    <property type="term" value="C:nucleus"/>
    <property type="evidence" value="ECO:0007669"/>
    <property type="project" value="UniProtKB-SubCell"/>
</dbReference>
<dbReference type="GO" id="GO:0052906">
    <property type="term" value="F:tRNA (guanine(37)-N1)-methyltransferase activity"/>
    <property type="evidence" value="ECO:0007669"/>
    <property type="project" value="UniProtKB-UniRule"/>
</dbReference>
<dbReference type="GO" id="GO:0008175">
    <property type="term" value="F:tRNA methyltransferase activity"/>
    <property type="evidence" value="ECO:0000318"/>
    <property type="project" value="GO_Central"/>
</dbReference>
<dbReference type="GO" id="GO:0070901">
    <property type="term" value="P:mitochondrial tRNA methylation"/>
    <property type="evidence" value="ECO:0000318"/>
    <property type="project" value="GO_Central"/>
</dbReference>
<dbReference type="GO" id="GO:0002939">
    <property type="term" value="P:tRNA N1-guanine methylation"/>
    <property type="evidence" value="ECO:0000318"/>
    <property type="project" value="GO_Central"/>
</dbReference>
<dbReference type="FunFam" id="3.30.300.110:FF:000001">
    <property type="entry name" value="tRNA (guanine(37)-N1)-methyltransferase"/>
    <property type="match status" value="1"/>
</dbReference>
<dbReference type="Gene3D" id="3.30.300.110">
    <property type="entry name" value="Met-10+ protein-like domains"/>
    <property type="match status" value="1"/>
</dbReference>
<dbReference type="Gene3D" id="3.40.50.150">
    <property type="entry name" value="Vaccinia Virus protein VP39"/>
    <property type="match status" value="1"/>
</dbReference>
<dbReference type="HAMAP" id="MF_03152">
    <property type="entry name" value="TRM5"/>
    <property type="match status" value="1"/>
</dbReference>
<dbReference type="InterPro" id="IPR030382">
    <property type="entry name" value="MeTrfase_TRM5/TYW2"/>
</dbReference>
<dbReference type="InterPro" id="IPR029063">
    <property type="entry name" value="SAM-dependent_MTases_sf"/>
</dbReference>
<dbReference type="InterPro" id="IPR056743">
    <property type="entry name" value="TRM5-TYW2-like_MTfase"/>
</dbReference>
<dbReference type="InterPro" id="IPR056744">
    <property type="entry name" value="TRM5/TYW2-like_N"/>
</dbReference>
<dbReference type="InterPro" id="IPR025792">
    <property type="entry name" value="tRNA_Gua_MeTrfase_euk"/>
</dbReference>
<dbReference type="PANTHER" id="PTHR23245:SF36">
    <property type="entry name" value="TRNA (GUANINE(37)-N1)-METHYLTRANSFERASE"/>
    <property type="match status" value="1"/>
</dbReference>
<dbReference type="PANTHER" id="PTHR23245">
    <property type="entry name" value="TRNA METHYLTRANSFERASE"/>
    <property type="match status" value="1"/>
</dbReference>
<dbReference type="Pfam" id="PF02475">
    <property type="entry name" value="TRM5-TYW2_MTfase"/>
    <property type="match status" value="1"/>
</dbReference>
<dbReference type="Pfam" id="PF25133">
    <property type="entry name" value="TYW2_N_2"/>
    <property type="match status" value="1"/>
</dbReference>
<dbReference type="SUPFAM" id="SSF53335">
    <property type="entry name" value="S-adenosyl-L-methionine-dependent methyltransferases"/>
    <property type="match status" value="1"/>
</dbReference>
<dbReference type="PROSITE" id="PS51684">
    <property type="entry name" value="SAM_MT_TRM5_TYW2"/>
    <property type="match status" value="1"/>
</dbReference>
<gene>
    <name evidence="1" type="primary">TRM5</name>
    <name type="ordered locus">CAALFM_C403730CA</name>
    <name type="ORF">CaO19.1305</name>
    <name type="ORF">CaO19.8885</name>
</gene>
<name>TRM5_CANAL</name>
<comment type="function">
    <text evidence="1">Specifically methylates the N1 position of guanosine-37 in various cytoplasmic and mitochondrial tRNAs. Methylation is not dependent on the nature of the nucleoside 5' of the target nucleoside. This is the first step in the biosynthesis of wybutosine (yW), a modified base adjacent to the anticodon of tRNAs and required for accurate decoding.</text>
</comment>
<comment type="catalytic activity">
    <reaction evidence="1">
        <text>guanosine(37) in tRNA + S-adenosyl-L-methionine = N(1)-methylguanosine(37) in tRNA + S-adenosyl-L-homocysteine + H(+)</text>
        <dbReference type="Rhea" id="RHEA:36899"/>
        <dbReference type="Rhea" id="RHEA-COMP:10145"/>
        <dbReference type="Rhea" id="RHEA-COMP:10147"/>
        <dbReference type="ChEBI" id="CHEBI:15378"/>
        <dbReference type="ChEBI" id="CHEBI:57856"/>
        <dbReference type="ChEBI" id="CHEBI:59789"/>
        <dbReference type="ChEBI" id="CHEBI:73542"/>
        <dbReference type="ChEBI" id="CHEBI:74269"/>
        <dbReference type="EC" id="2.1.1.228"/>
    </reaction>
</comment>
<comment type="subunit">
    <text evidence="1">Monomer.</text>
</comment>
<comment type="subcellular location">
    <subcellularLocation>
        <location evidence="1">Mitochondrion matrix</location>
    </subcellularLocation>
    <subcellularLocation>
        <location evidence="1">Nucleus</location>
    </subcellularLocation>
    <subcellularLocation>
        <location evidence="1">Cytoplasm</location>
    </subcellularLocation>
    <text evidence="1">Predominantly in the mitochondria and in the nucleus.</text>
</comment>
<comment type="similarity">
    <text evidence="2">Belongs to the class I-like SAM-binding methyltransferase superfamily. TRM5/TYW2 family.</text>
</comment>
<organism>
    <name type="scientific">Candida albicans (strain SC5314 / ATCC MYA-2876)</name>
    <name type="common">Yeast</name>
    <dbReference type="NCBI Taxonomy" id="237561"/>
    <lineage>
        <taxon>Eukaryota</taxon>
        <taxon>Fungi</taxon>
        <taxon>Dikarya</taxon>
        <taxon>Ascomycota</taxon>
        <taxon>Saccharomycotina</taxon>
        <taxon>Pichiomycetes</taxon>
        <taxon>Debaryomycetaceae</taxon>
        <taxon>Candida/Lodderomyces clade</taxon>
        <taxon>Candida</taxon>
    </lineage>
</organism>
<accession>Q59TN1</accession>
<accession>A0A1D8PLV9</accession>
<reference key="1">
    <citation type="journal article" date="2004" name="Proc. Natl. Acad. Sci. U.S.A.">
        <title>The diploid genome sequence of Candida albicans.</title>
        <authorList>
            <person name="Jones T."/>
            <person name="Federspiel N.A."/>
            <person name="Chibana H."/>
            <person name="Dungan J."/>
            <person name="Kalman S."/>
            <person name="Magee B.B."/>
            <person name="Newport G."/>
            <person name="Thorstenson Y.R."/>
            <person name="Agabian N."/>
            <person name="Magee P.T."/>
            <person name="Davis R.W."/>
            <person name="Scherer S."/>
        </authorList>
    </citation>
    <scope>NUCLEOTIDE SEQUENCE [LARGE SCALE GENOMIC DNA]</scope>
    <source>
        <strain>SC5314 / ATCC MYA-2876</strain>
    </source>
</reference>
<reference key="2">
    <citation type="journal article" date="2007" name="Genome Biol.">
        <title>Assembly of the Candida albicans genome into sixteen supercontigs aligned on the eight chromosomes.</title>
        <authorList>
            <person name="van het Hoog M."/>
            <person name="Rast T.J."/>
            <person name="Martchenko M."/>
            <person name="Grindle S."/>
            <person name="Dignard D."/>
            <person name="Hogues H."/>
            <person name="Cuomo C."/>
            <person name="Berriman M."/>
            <person name="Scherer S."/>
            <person name="Magee B.B."/>
            <person name="Whiteway M."/>
            <person name="Chibana H."/>
            <person name="Nantel A."/>
            <person name="Magee P.T."/>
        </authorList>
    </citation>
    <scope>GENOME REANNOTATION</scope>
    <source>
        <strain>SC5314 / ATCC MYA-2876</strain>
    </source>
</reference>
<reference key="3">
    <citation type="journal article" date="2013" name="Genome Biol.">
        <title>Assembly of a phased diploid Candida albicans genome facilitates allele-specific measurements and provides a simple model for repeat and indel structure.</title>
        <authorList>
            <person name="Muzzey D."/>
            <person name="Schwartz K."/>
            <person name="Weissman J.S."/>
            <person name="Sherlock G."/>
        </authorList>
    </citation>
    <scope>NUCLEOTIDE SEQUENCE [LARGE SCALE GENOMIC DNA]</scope>
    <scope>GENOME REANNOTATION</scope>
    <source>
        <strain>SC5314 / ATCC MYA-2876</strain>
    </source>
</reference>
<proteinExistence type="inferred from homology"/>
<sequence>MSKFSPPINRNMVELDRSFFHKEVPLLAAYFPNPKFLGQFVKSCQNDILYVQTVKHIISMDDSKAILLRDDVKSISDLNPETQLKINEFGIILKPYTLKLDYSFWKSEEILKSILPENLIDDVPSGFSQAGHLAHINLRDEYKPFGKLIGQVILDKNPSVLTVVDKVNTIANKFRTFPLELLAGEPNYIVEQSESGCKFKFDFSKVYWNSRLSTEHERIIGKFNSGDVVGDVFGGVGPFAIPASKKNVIVLANDLNPESYKYLQENIKINKVEPFIKPFNLDGREFIRKAPELLLQWHNSQNGIIEKKIIKKVSIDDNKTKKNFERKPIIETTKIPKFYHHFVMNLPDSALTFLDEFIGLYGSNPQLKTDPEFKLPIIHVHCFEKFENNENPTPEELHNRVYEKICKLIQFPLNKEKMEFHEVRMVSPTKPMFCVSFELPEEVAFKQSK</sequence>